<evidence type="ECO:0000250" key="1"/>
<evidence type="ECO:0000255" key="2">
    <source>
        <dbReference type="HAMAP-Rule" id="MF_00100"/>
    </source>
</evidence>
<proteinExistence type="inferred from homology"/>
<organism>
    <name type="scientific">Pseudothermotoga lettingae (strain ATCC BAA-301 / DSM 14385 / NBRC 107922 / TMO)</name>
    <name type="common">Thermotoga lettingae</name>
    <dbReference type="NCBI Taxonomy" id="416591"/>
    <lineage>
        <taxon>Bacteria</taxon>
        <taxon>Thermotogati</taxon>
        <taxon>Thermotogota</taxon>
        <taxon>Thermotogae</taxon>
        <taxon>Thermotogales</taxon>
        <taxon>Thermotogaceae</taxon>
        <taxon>Pseudothermotoga</taxon>
    </lineage>
</organism>
<reference key="1">
    <citation type="submission" date="2007-08" db="EMBL/GenBank/DDBJ databases">
        <title>Complete sequence of Thermotoga lettingae TMO.</title>
        <authorList>
            <consortium name="US DOE Joint Genome Institute"/>
            <person name="Copeland A."/>
            <person name="Lucas S."/>
            <person name="Lapidus A."/>
            <person name="Barry K."/>
            <person name="Glavina del Rio T."/>
            <person name="Dalin E."/>
            <person name="Tice H."/>
            <person name="Pitluck S."/>
            <person name="Foster B."/>
            <person name="Bruce D."/>
            <person name="Schmutz J."/>
            <person name="Larimer F."/>
            <person name="Land M."/>
            <person name="Hauser L."/>
            <person name="Kyrpides N."/>
            <person name="Mikhailova N."/>
            <person name="Nelson K."/>
            <person name="Gogarten J.P."/>
            <person name="Noll K."/>
            <person name="Richardson P."/>
        </authorList>
    </citation>
    <scope>NUCLEOTIDE SEQUENCE [LARGE SCALE GENOMIC DNA]</scope>
    <source>
        <strain>ATCC BAA-301 / DSM 14385 / NBRC 107922 / TMO</strain>
    </source>
</reference>
<protein>
    <recommendedName>
        <fullName evidence="2">Translation initiation factor IF-2</fullName>
    </recommendedName>
</protein>
<comment type="function">
    <text evidence="2">One of the essential components for the initiation of protein synthesis. Protects formylmethionyl-tRNA from spontaneous hydrolysis and promotes its binding to the 30S ribosomal subunits. Also involved in the hydrolysis of GTP during the formation of the 70S ribosomal complex.</text>
</comment>
<comment type="subcellular location">
    <subcellularLocation>
        <location evidence="2">Cytoplasm</location>
    </subcellularLocation>
</comment>
<comment type="similarity">
    <text evidence="2">Belongs to the TRAFAC class translation factor GTPase superfamily. Classic translation factor GTPase family. IF-2 subfamily.</text>
</comment>
<feature type="chain" id="PRO_1000057662" description="Translation initiation factor IF-2">
    <location>
        <begin position="1"/>
        <end position="674"/>
    </location>
</feature>
<feature type="domain" description="tr-type G">
    <location>
        <begin position="174"/>
        <end position="344"/>
    </location>
</feature>
<feature type="region of interest" description="G1" evidence="1">
    <location>
        <begin position="183"/>
        <end position="190"/>
    </location>
</feature>
<feature type="region of interest" description="G2" evidence="1">
    <location>
        <begin position="208"/>
        <end position="212"/>
    </location>
</feature>
<feature type="region of interest" description="G3" evidence="1">
    <location>
        <begin position="229"/>
        <end position="232"/>
    </location>
</feature>
<feature type="region of interest" description="G4" evidence="1">
    <location>
        <begin position="283"/>
        <end position="286"/>
    </location>
</feature>
<feature type="region of interest" description="G5" evidence="1">
    <location>
        <begin position="320"/>
        <end position="322"/>
    </location>
</feature>
<feature type="binding site" evidence="2">
    <location>
        <begin position="183"/>
        <end position="190"/>
    </location>
    <ligand>
        <name>GTP</name>
        <dbReference type="ChEBI" id="CHEBI:37565"/>
    </ligand>
</feature>
<feature type="binding site" evidence="2">
    <location>
        <begin position="229"/>
        <end position="233"/>
    </location>
    <ligand>
        <name>GTP</name>
        <dbReference type="ChEBI" id="CHEBI:37565"/>
    </ligand>
</feature>
<feature type="binding site" evidence="2">
    <location>
        <begin position="283"/>
        <end position="286"/>
    </location>
    <ligand>
        <name>GTP</name>
        <dbReference type="ChEBI" id="CHEBI:37565"/>
    </ligand>
</feature>
<name>IF2_PSELT</name>
<gene>
    <name evidence="2" type="primary">infB</name>
    <name type="ordered locus">Tlet_0768</name>
</gene>
<keyword id="KW-0963">Cytoplasm</keyword>
<keyword id="KW-0342">GTP-binding</keyword>
<keyword id="KW-0396">Initiation factor</keyword>
<keyword id="KW-0547">Nucleotide-binding</keyword>
<keyword id="KW-0648">Protein biosynthesis</keyword>
<keyword id="KW-1185">Reference proteome</keyword>
<accession>A8F5A0</accession>
<dbReference type="EMBL" id="CP000812">
    <property type="protein sequence ID" value="ABV33334.1"/>
    <property type="molecule type" value="Genomic_DNA"/>
</dbReference>
<dbReference type="RefSeq" id="WP_012002815.1">
    <property type="nucleotide sequence ID" value="NZ_BSDV01000001.1"/>
</dbReference>
<dbReference type="SMR" id="A8F5A0"/>
<dbReference type="STRING" id="416591.Tlet_0768"/>
<dbReference type="KEGG" id="tle:Tlet_0768"/>
<dbReference type="eggNOG" id="COG0532">
    <property type="taxonomic scope" value="Bacteria"/>
</dbReference>
<dbReference type="HOGENOM" id="CLU_006301_5_1_0"/>
<dbReference type="OrthoDB" id="9811804at2"/>
<dbReference type="Proteomes" id="UP000002016">
    <property type="component" value="Chromosome"/>
</dbReference>
<dbReference type="GO" id="GO:0005829">
    <property type="term" value="C:cytosol"/>
    <property type="evidence" value="ECO:0007669"/>
    <property type="project" value="TreeGrafter"/>
</dbReference>
<dbReference type="GO" id="GO:0005525">
    <property type="term" value="F:GTP binding"/>
    <property type="evidence" value="ECO:0007669"/>
    <property type="project" value="UniProtKB-KW"/>
</dbReference>
<dbReference type="GO" id="GO:0003924">
    <property type="term" value="F:GTPase activity"/>
    <property type="evidence" value="ECO:0007669"/>
    <property type="project" value="UniProtKB-UniRule"/>
</dbReference>
<dbReference type="GO" id="GO:0003743">
    <property type="term" value="F:translation initiation factor activity"/>
    <property type="evidence" value="ECO:0007669"/>
    <property type="project" value="UniProtKB-UniRule"/>
</dbReference>
<dbReference type="CDD" id="cd01887">
    <property type="entry name" value="IF2_eIF5B"/>
    <property type="match status" value="1"/>
</dbReference>
<dbReference type="CDD" id="cd03702">
    <property type="entry name" value="IF2_mtIF2_II"/>
    <property type="match status" value="1"/>
</dbReference>
<dbReference type="CDD" id="cd03692">
    <property type="entry name" value="mtIF2_IVc"/>
    <property type="match status" value="1"/>
</dbReference>
<dbReference type="FunFam" id="2.40.30.10:FF:000008">
    <property type="entry name" value="Translation initiation factor IF-2"/>
    <property type="match status" value="1"/>
</dbReference>
<dbReference type="FunFam" id="2.40.30.10:FF:000054">
    <property type="entry name" value="Translation initiation factor IF-2"/>
    <property type="match status" value="1"/>
</dbReference>
<dbReference type="FunFam" id="3.40.50.10050:FF:000001">
    <property type="entry name" value="Translation initiation factor IF-2"/>
    <property type="match status" value="1"/>
</dbReference>
<dbReference type="FunFam" id="3.40.50.300:FF:000019">
    <property type="entry name" value="Translation initiation factor IF-2"/>
    <property type="match status" value="1"/>
</dbReference>
<dbReference type="Gene3D" id="1.10.10.2480">
    <property type="match status" value="1"/>
</dbReference>
<dbReference type="Gene3D" id="3.40.50.300">
    <property type="entry name" value="P-loop containing nucleotide triphosphate hydrolases"/>
    <property type="match status" value="1"/>
</dbReference>
<dbReference type="Gene3D" id="2.40.30.10">
    <property type="entry name" value="Translation factors"/>
    <property type="match status" value="2"/>
</dbReference>
<dbReference type="Gene3D" id="3.40.50.10050">
    <property type="entry name" value="Translation initiation factor IF- 2, domain 3"/>
    <property type="match status" value="1"/>
</dbReference>
<dbReference type="HAMAP" id="MF_00100_B">
    <property type="entry name" value="IF_2_B"/>
    <property type="match status" value="1"/>
</dbReference>
<dbReference type="InterPro" id="IPR053905">
    <property type="entry name" value="EF-G-like_DII"/>
</dbReference>
<dbReference type="InterPro" id="IPR044145">
    <property type="entry name" value="IF2_II"/>
</dbReference>
<dbReference type="InterPro" id="IPR006847">
    <property type="entry name" value="IF2_N"/>
</dbReference>
<dbReference type="InterPro" id="IPR027417">
    <property type="entry name" value="P-loop_NTPase"/>
</dbReference>
<dbReference type="InterPro" id="IPR005225">
    <property type="entry name" value="Small_GTP-bd"/>
</dbReference>
<dbReference type="InterPro" id="IPR000795">
    <property type="entry name" value="T_Tr_GTP-bd_dom"/>
</dbReference>
<dbReference type="InterPro" id="IPR000178">
    <property type="entry name" value="TF_IF2_bacterial-like"/>
</dbReference>
<dbReference type="InterPro" id="IPR015760">
    <property type="entry name" value="TIF_IF2"/>
</dbReference>
<dbReference type="InterPro" id="IPR023115">
    <property type="entry name" value="TIF_IF2_dom3"/>
</dbReference>
<dbReference type="InterPro" id="IPR036925">
    <property type="entry name" value="TIF_IF2_dom3_sf"/>
</dbReference>
<dbReference type="InterPro" id="IPR009000">
    <property type="entry name" value="Transl_B-barrel_sf"/>
</dbReference>
<dbReference type="NCBIfam" id="TIGR00487">
    <property type="entry name" value="IF-2"/>
    <property type="match status" value="1"/>
</dbReference>
<dbReference type="NCBIfam" id="TIGR00231">
    <property type="entry name" value="small_GTP"/>
    <property type="match status" value="1"/>
</dbReference>
<dbReference type="PANTHER" id="PTHR43381:SF5">
    <property type="entry name" value="TR-TYPE G DOMAIN-CONTAINING PROTEIN"/>
    <property type="match status" value="1"/>
</dbReference>
<dbReference type="PANTHER" id="PTHR43381">
    <property type="entry name" value="TRANSLATION INITIATION FACTOR IF-2-RELATED"/>
    <property type="match status" value="1"/>
</dbReference>
<dbReference type="Pfam" id="PF22042">
    <property type="entry name" value="EF-G_D2"/>
    <property type="match status" value="1"/>
</dbReference>
<dbReference type="Pfam" id="PF00009">
    <property type="entry name" value="GTP_EFTU"/>
    <property type="match status" value="1"/>
</dbReference>
<dbReference type="Pfam" id="PF11987">
    <property type="entry name" value="IF-2"/>
    <property type="match status" value="1"/>
</dbReference>
<dbReference type="Pfam" id="PF04760">
    <property type="entry name" value="IF2_N"/>
    <property type="match status" value="2"/>
</dbReference>
<dbReference type="SUPFAM" id="SSF52156">
    <property type="entry name" value="Initiation factor IF2/eIF5b, domain 3"/>
    <property type="match status" value="1"/>
</dbReference>
<dbReference type="SUPFAM" id="SSF52540">
    <property type="entry name" value="P-loop containing nucleoside triphosphate hydrolases"/>
    <property type="match status" value="1"/>
</dbReference>
<dbReference type="SUPFAM" id="SSF50447">
    <property type="entry name" value="Translation proteins"/>
    <property type="match status" value="2"/>
</dbReference>
<dbReference type="PROSITE" id="PS51722">
    <property type="entry name" value="G_TR_2"/>
    <property type="match status" value="1"/>
</dbReference>
<sequence>MPRLRVYELAKKLNMSTKDLLQELEELGLNVKNHMSYIDEETVGLLLEIFEEEEETAAKAKAAKPKKEKEELEEIFQEVVLKPEDLQLNTLAVKIGVPLNRIIQDMFVKGIVLKPTQQIDEKTAKDIAKIYGYRAKFYQPEEEISELETIENELERLEKYFETLYETHKDELSIRPPVVTVMGHVDHGKTTLLDKIRRTRVAEKEVGGITQSIGAYQVVHKGKKITFIDTPGHELFTEMRAKGAQATDIVVLVVAADDGVMPQTIEAYNHAKVANVPVIVAINKIDKPNANIEATKRQLVDKLNIIPEDWGGDTITVPISARTGHGIDELLEMILLVAELREIKCYPKGPARCVIIESKLDRSLGPVANVIVKDGELRVGDYLVAGPTYCKVRILIDDKGKSIKIAEPSQPVMIVGFEEVPDIRYSIYAVESLESARTVTQQLKERLERDKMAKRRVRLEELLKMMEESEKKELNLVLKADTFGSLSAVQNAIASLKSEEIKINIVHSGVGTVNNSDVMLASASNGIIVGFRVKVDAQARKTAENEGIQIKTYEIIYDLLDNMKLALEGMLKPETVEELVGRGEIRKIFDIKKVGKIAGVQLLEGHVSKDCIVKVYRNGTFLFSDQIDSLKHYKEDVDKVSAPQECGLKLKSNEDLRENDELEFYEQHQVQKKL</sequence>